<reference key="1">
    <citation type="journal article" date="2005" name="BMC Biol.">
        <title>The sequence of rice chromosomes 11 and 12, rich in disease resistance genes and recent gene duplications.</title>
        <authorList>
            <consortium name="The rice chromosomes 11 and 12 sequencing consortia"/>
        </authorList>
    </citation>
    <scope>NUCLEOTIDE SEQUENCE [LARGE SCALE GENOMIC DNA]</scope>
    <source>
        <strain>cv. Nipponbare</strain>
    </source>
</reference>
<reference key="2">
    <citation type="journal article" date="2005" name="Nature">
        <title>The map-based sequence of the rice genome.</title>
        <authorList>
            <consortium name="International rice genome sequencing project (IRGSP)"/>
        </authorList>
    </citation>
    <scope>NUCLEOTIDE SEQUENCE [LARGE SCALE GENOMIC DNA]</scope>
    <source>
        <strain>cv. Nipponbare</strain>
    </source>
</reference>
<reference key="3">
    <citation type="journal article" date="2008" name="Nucleic Acids Res.">
        <title>The rice annotation project database (RAP-DB): 2008 update.</title>
        <authorList>
            <consortium name="The rice annotation project (RAP)"/>
        </authorList>
    </citation>
    <scope>GENOME REANNOTATION</scope>
    <source>
        <strain>cv. Nipponbare</strain>
    </source>
</reference>
<reference key="4">
    <citation type="journal article" date="2013" name="Rice">
        <title>Improvement of the Oryza sativa Nipponbare reference genome using next generation sequence and optical map data.</title>
        <authorList>
            <person name="Kawahara Y."/>
            <person name="de la Bastide M."/>
            <person name="Hamilton J.P."/>
            <person name="Kanamori H."/>
            <person name="McCombie W.R."/>
            <person name="Ouyang S."/>
            <person name="Schwartz D.C."/>
            <person name="Tanaka T."/>
            <person name="Wu J."/>
            <person name="Zhou S."/>
            <person name="Childs K.L."/>
            <person name="Davidson R.M."/>
            <person name="Lin H."/>
            <person name="Quesada-Ocampo L."/>
            <person name="Vaillancourt B."/>
            <person name="Sakai H."/>
            <person name="Lee S.S."/>
            <person name="Kim J."/>
            <person name="Numa H."/>
            <person name="Itoh T."/>
            <person name="Buell C.R."/>
            <person name="Matsumoto T."/>
        </authorList>
    </citation>
    <scope>GENOME REANNOTATION</scope>
    <source>
        <strain>cv. Nipponbare</strain>
    </source>
</reference>
<reference key="5">
    <citation type="journal article" date="2003" name="Science">
        <title>Collection, mapping, and annotation of over 28,000 cDNA clones from japonica rice.</title>
        <authorList>
            <consortium name="The rice full-length cDNA consortium"/>
        </authorList>
    </citation>
    <scope>NUCLEOTIDE SEQUENCE [LARGE SCALE MRNA]</scope>
    <source>
        <strain>cv. Nipponbare</strain>
    </source>
</reference>
<proteinExistence type="evidence at transcript level"/>
<keyword id="KW-0256">Endoplasmic reticulum</keyword>
<keyword id="KW-0333">Golgi apparatus</keyword>
<keyword id="KW-0472">Membrane</keyword>
<keyword id="KW-1185">Reference proteome</keyword>
<keyword id="KW-0812">Transmembrane</keyword>
<keyword id="KW-1133">Transmembrane helix</keyword>
<gene>
    <name evidence="3" type="primary">CNIH2</name>
    <name evidence="5" type="ordered locus">Os12g0506400</name>
    <name evidence="4" type="ordered locus">LOC_Os12g32180</name>
</gene>
<dbReference type="EMBL" id="DP000011">
    <property type="protein sequence ID" value="ABA98682.1"/>
    <property type="molecule type" value="Genomic_DNA"/>
</dbReference>
<dbReference type="EMBL" id="AP008218">
    <property type="protein sequence ID" value="BAF29856.1"/>
    <property type="molecule type" value="Genomic_DNA"/>
</dbReference>
<dbReference type="EMBL" id="AP014968">
    <property type="protein sequence ID" value="BAT17291.1"/>
    <property type="molecule type" value="Genomic_DNA"/>
</dbReference>
<dbReference type="EMBL" id="AK060944">
    <property type="protein sequence ID" value="BAG87633.1"/>
    <property type="molecule type" value="mRNA"/>
</dbReference>
<dbReference type="SMR" id="Q2QQ55"/>
<dbReference type="FunCoup" id="Q2QQ55">
    <property type="interactions" value="2026"/>
</dbReference>
<dbReference type="STRING" id="39947.Q2QQ55"/>
<dbReference type="PaxDb" id="39947-Q2QQ55"/>
<dbReference type="EnsemblPlants" id="Os12t0506400-01">
    <property type="protein sequence ID" value="Os12t0506400-01"/>
    <property type="gene ID" value="Os12g0506400"/>
</dbReference>
<dbReference type="Gramene" id="Os12t0506400-01">
    <property type="protein sequence ID" value="Os12t0506400-01"/>
    <property type="gene ID" value="Os12g0506400"/>
</dbReference>
<dbReference type="KEGG" id="dosa:Os12g0506400"/>
<dbReference type="KEGG" id="osa:4352293"/>
<dbReference type="eggNOG" id="KOG2729">
    <property type="taxonomic scope" value="Eukaryota"/>
</dbReference>
<dbReference type="HOGENOM" id="CLU_112942_3_0_1"/>
<dbReference type="InParanoid" id="Q2QQ55"/>
<dbReference type="OMA" id="FAVFHVI"/>
<dbReference type="OrthoDB" id="434393at2759"/>
<dbReference type="Proteomes" id="UP000000763">
    <property type="component" value="Chromosome 12"/>
</dbReference>
<dbReference type="Proteomes" id="UP000059680">
    <property type="component" value="Chromosome 12"/>
</dbReference>
<dbReference type="GO" id="GO:0005789">
    <property type="term" value="C:endoplasmic reticulum membrane"/>
    <property type="evidence" value="ECO:0007669"/>
    <property type="project" value="UniProtKB-SubCell"/>
</dbReference>
<dbReference type="GO" id="GO:0000139">
    <property type="term" value="C:Golgi membrane"/>
    <property type="evidence" value="ECO:0007669"/>
    <property type="project" value="UniProtKB-SubCell"/>
</dbReference>
<dbReference type="GO" id="GO:0005102">
    <property type="term" value="F:signaling receptor binding"/>
    <property type="evidence" value="ECO:0000318"/>
    <property type="project" value="GO_Central"/>
</dbReference>
<dbReference type="GO" id="GO:0016192">
    <property type="term" value="P:vesicle-mediated transport"/>
    <property type="evidence" value="ECO:0007669"/>
    <property type="project" value="InterPro"/>
</dbReference>
<dbReference type="InterPro" id="IPR003377">
    <property type="entry name" value="Cornichon"/>
</dbReference>
<dbReference type="PANTHER" id="PTHR12290">
    <property type="entry name" value="CORNICHON-RELATED"/>
    <property type="match status" value="1"/>
</dbReference>
<dbReference type="Pfam" id="PF03311">
    <property type="entry name" value="Cornichon"/>
    <property type="match status" value="1"/>
</dbReference>
<dbReference type="SMART" id="SM01398">
    <property type="entry name" value="Cornichon"/>
    <property type="match status" value="1"/>
</dbReference>
<feature type="chain" id="PRO_0000455964" description="Protein cornichon homolog 2">
    <location>
        <begin position="1"/>
        <end position="149"/>
    </location>
</feature>
<feature type="transmembrane region" description="Helical" evidence="2">
    <location>
        <begin position="3"/>
        <end position="23"/>
    </location>
</feature>
<feature type="transmembrane region" description="Helical" evidence="2">
    <location>
        <begin position="59"/>
        <end position="79"/>
    </location>
</feature>
<feature type="transmembrane region" description="Helical" evidence="2">
    <location>
        <begin position="117"/>
        <end position="137"/>
    </location>
</feature>
<sequence>MSIELILWLFSFASIMVLIGLTAYQLICLSDLEFDYINPYDSSSRINSVVLIEYALQGALCASFLLTLHWFPFLVMAPVAYYHGKLYMDRKHLVDVTEIFRQLNWEKKYRMIKLAFYFSLFIITIYRLVMTAVTLFIDEDANLVDTRTI</sequence>
<name>CNIH2_ORYSJ</name>
<protein>
    <recommendedName>
        <fullName evidence="3">Protein cornichon homolog 2</fullName>
    </recommendedName>
</protein>
<accession>Q2QQ55</accession>
<accession>Q0IN59</accession>
<evidence type="ECO:0000250" key="1">
    <source>
        <dbReference type="UniProtKB" id="Q0DET3"/>
    </source>
</evidence>
<evidence type="ECO:0000255" key="2"/>
<evidence type="ECO:0000305" key="3"/>
<evidence type="ECO:0000312" key="4">
    <source>
        <dbReference type="EMBL" id="ABA98682.1"/>
    </source>
</evidence>
<evidence type="ECO:0000312" key="5">
    <source>
        <dbReference type="EMBL" id="BAT17291.1"/>
    </source>
</evidence>
<organism>
    <name type="scientific">Oryza sativa subsp. japonica</name>
    <name type="common">Rice</name>
    <dbReference type="NCBI Taxonomy" id="39947"/>
    <lineage>
        <taxon>Eukaryota</taxon>
        <taxon>Viridiplantae</taxon>
        <taxon>Streptophyta</taxon>
        <taxon>Embryophyta</taxon>
        <taxon>Tracheophyta</taxon>
        <taxon>Spermatophyta</taxon>
        <taxon>Magnoliopsida</taxon>
        <taxon>Liliopsida</taxon>
        <taxon>Poales</taxon>
        <taxon>Poaceae</taxon>
        <taxon>BOP clade</taxon>
        <taxon>Oryzoideae</taxon>
        <taxon>Oryzeae</taxon>
        <taxon>Oryzinae</taxon>
        <taxon>Oryza</taxon>
        <taxon>Oryza sativa</taxon>
    </lineage>
</organism>
<comment type="function">
    <text evidence="1">Acts as a cargo receptor necessary for the transportation of secretory proteins from the endoplasmic reticulum (ER) in COPII-coated vesicles targeted to the Golgi apparatus.</text>
</comment>
<comment type="subcellular location">
    <subcellularLocation>
        <location evidence="1">Endoplasmic reticulum membrane</location>
        <topology evidence="2">Multi-pass membrane protein</topology>
    </subcellularLocation>
    <subcellularLocation>
        <location evidence="1">Golgi apparatus membrane</location>
        <topology evidence="2">Multi-pass membrane protein</topology>
    </subcellularLocation>
    <text evidence="1">Located primarily in the endoplasmic reticulum (ER); may cycle between the ER and the Golgi apparatus.</text>
</comment>
<comment type="similarity">
    <text evidence="3">Belongs to the cornichon family.</text>
</comment>